<evidence type="ECO:0000250" key="1">
    <source>
        <dbReference type="UniProtKB" id="A0A009IHW8"/>
    </source>
</evidence>
<evidence type="ECO:0000250" key="2">
    <source>
        <dbReference type="UniProtKB" id="Q8YF53"/>
    </source>
</evidence>
<evidence type="ECO:0000255" key="3">
    <source>
        <dbReference type="PROSITE-ProRule" id="PRU00204"/>
    </source>
</evidence>
<evidence type="ECO:0000256" key="4">
    <source>
        <dbReference type="SAM" id="MobiDB-lite"/>
    </source>
</evidence>
<evidence type="ECO:0000305" key="5"/>
<evidence type="ECO:0000312" key="6">
    <source>
        <dbReference type="EMBL" id="ACO00076.1"/>
    </source>
</evidence>
<protein>
    <recommendedName>
        <fullName evidence="5">Probable 2' cyclic ADP-D-ribose synthase TcpB</fullName>
        <shortName evidence="5">2'cADPR synthase TcpB</shortName>
        <ecNumber evidence="1">3.2.2.-</ecNumber>
    </recommendedName>
    <alternativeName>
        <fullName evidence="5">Brucella TIR-containing protein 1</fullName>
        <shortName evidence="5">Btp1</shortName>
    </alternativeName>
    <alternativeName>
        <fullName evidence="2">NAD(+) hydrolase TcpB</fullName>
        <ecNumber evidence="2">3.2.2.6</ecNumber>
    </alternativeName>
    <alternativeName>
        <fullName evidence="5">TIR domain-containing protein in Brucella</fullName>
        <shortName evidence="5">TcpB</shortName>
    </alternativeName>
</protein>
<reference key="1">
    <citation type="submission" date="2009-03" db="EMBL/GenBank/DDBJ databases">
        <title>Brucella melitensis ATCC 23457 whole genome shotgun sequencing project.</title>
        <authorList>
            <person name="Setubal J.C."/>
            <person name="Boyle S."/>
            <person name="Crasta O.R."/>
            <person name="Gillespie J.J."/>
            <person name="Kenyon R.W."/>
            <person name="Lu J."/>
            <person name="Mane S."/>
            <person name="Nagrani S."/>
            <person name="Shallom J.M."/>
            <person name="Shallom S."/>
            <person name="Shukla M."/>
            <person name="Snyder E.E."/>
            <person name="Sobral B.W."/>
            <person name="Wattam A.R."/>
            <person name="Will R."/>
            <person name="Williams K."/>
            <person name="Yoo H."/>
            <person name="Munk C."/>
            <person name="Tapia R."/>
            <person name="Han C."/>
            <person name="Detter J.C."/>
            <person name="Bruce D."/>
            <person name="Brettin T.S."/>
        </authorList>
    </citation>
    <scope>NUCLEOTIDE SEQUENCE [LARGE SCALE GENOMIC DNA]</scope>
    <source>
        <strain>ATCC 23457</strain>
    </source>
</reference>
<feature type="chain" id="PRO_0000449140" description="Probable 2' cyclic ADP-D-ribose synthase TcpB">
    <location>
        <begin position="1"/>
        <end position="275"/>
    </location>
</feature>
<feature type="domain" description="TIR" evidence="3">
    <location>
        <begin position="142"/>
        <end position="275"/>
    </location>
</feature>
<feature type="region of interest" description="Disordered" evidence="4">
    <location>
        <begin position="17"/>
        <end position="66"/>
    </location>
</feature>
<feature type="compositionally biased region" description="Basic and acidic residues" evidence="4">
    <location>
        <begin position="17"/>
        <end position="32"/>
    </location>
</feature>
<feature type="compositionally biased region" description="Low complexity" evidence="4">
    <location>
        <begin position="39"/>
        <end position="48"/>
    </location>
</feature>
<feature type="compositionally biased region" description="Basic and acidic residues" evidence="4">
    <location>
        <begin position="55"/>
        <end position="64"/>
    </location>
</feature>
<feature type="active site" evidence="3">
    <location>
        <position position="217"/>
    </location>
</feature>
<feature type="binding site" evidence="3">
    <location>
        <begin position="151"/>
        <end position="152"/>
    </location>
    <ligand>
        <name>NAD(+)</name>
        <dbReference type="ChEBI" id="CHEBI:57540"/>
    </ligand>
</feature>
<feature type="binding site" evidence="3">
    <location>
        <position position="181"/>
    </location>
    <ligand>
        <name>NAD(+)</name>
        <dbReference type="ChEBI" id="CHEBI:57540"/>
    </ligand>
</feature>
<comment type="function">
    <text evidence="2">Virulence factor that interferes with host Toll-like receptor 2 (TLR2) and TLR4 signaling, resulting in the reduction of dendritic cell maturation, inhibition of pro-inflammatory cytokine secretion and impaired NF-kappa-B activation in macrophages. Binds host lipids. Has NAD(+) hydrolase (NADase) activity, catalyzes cleavage of NAD(+) into ADP-D-ribose (ADPR) and nicotinamide, also generates a cyclization variant of cyclic ADPR (cADPR), termed v-cADPR (probably 2'cADPR).</text>
</comment>
<comment type="catalytic activity">
    <reaction evidence="2">
        <text>NAD(+) + H2O = ADP-D-ribose + nicotinamide + H(+)</text>
        <dbReference type="Rhea" id="RHEA:16301"/>
        <dbReference type="ChEBI" id="CHEBI:15377"/>
        <dbReference type="ChEBI" id="CHEBI:15378"/>
        <dbReference type="ChEBI" id="CHEBI:17154"/>
        <dbReference type="ChEBI" id="CHEBI:57540"/>
        <dbReference type="ChEBI" id="CHEBI:57967"/>
        <dbReference type="EC" id="3.2.2.6"/>
    </reaction>
    <physiologicalReaction direction="left-to-right" evidence="2">
        <dbReference type="Rhea" id="RHEA:16302"/>
    </physiologicalReaction>
</comment>
<comment type="catalytic activity">
    <reaction evidence="1 2">
        <text>NAD(+) = 2'cADPR + nicotinamide + H(+)</text>
        <dbReference type="Rhea" id="RHEA:75299"/>
        <dbReference type="ChEBI" id="CHEBI:15378"/>
        <dbReference type="ChEBI" id="CHEBI:17154"/>
        <dbReference type="ChEBI" id="CHEBI:57540"/>
        <dbReference type="ChEBI" id="CHEBI:194248"/>
    </reaction>
</comment>
<comment type="subunit">
    <text evidence="2">Homodimer. Interacts with host TIRAP, and probably host MYD88. Interacts with host TLR4, abolishes the interaction of host TIRAP with TLR4.</text>
</comment>
<comment type="subcellular location">
    <subcellularLocation>
        <location evidence="2">Secreted</location>
    </subcellularLocation>
    <subcellularLocation>
        <location evidence="2">Host cell membrane</location>
    </subcellularLocation>
    <text evidence="5">Translocated into the host cell via the type IV secretion system (T4SS).</text>
</comment>
<comment type="domain">
    <text evidence="2">The TIR domain mediates NAD(+) hydrolase (NADase) activity. The N-terminal region is required for localization to the host cell membrane.</text>
</comment>
<comment type="caution">
    <text evidence="5">It is unclear if Met-1 or Met-26 is the start codon.</text>
</comment>
<name>TCPB_BRUMB</name>
<organism>
    <name type="scientific">Brucella melitensis biotype 2 (strain ATCC 23457)</name>
    <dbReference type="NCBI Taxonomy" id="546272"/>
    <lineage>
        <taxon>Bacteria</taxon>
        <taxon>Pseudomonadati</taxon>
        <taxon>Pseudomonadota</taxon>
        <taxon>Alphaproteobacteria</taxon>
        <taxon>Hyphomicrobiales</taxon>
        <taxon>Brucellaceae</taxon>
        <taxon>Brucella/Ochrobactrum group</taxon>
        <taxon>Brucella</taxon>
    </lineage>
</organism>
<keyword id="KW-1032">Host cell membrane</keyword>
<keyword id="KW-1043">Host membrane</keyword>
<keyword id="KW-0378">Hydrolase</keyword>
<keyword id="KW-0446">Lipid-binding</keyword>
<keyword id="KW-0472">Membrane</keyword>
<keyword id="KW-0520">NAD</keyword>
<keyword id="KW-0964">Secreted</keyword>
<keyword id="KW-0843">Virulence</keyword>
<sequence length="275" mass="30922">MSSYSSNIDRLQREIARLKADDSREMSKEKQAQSKAHKAQQAISSAKSLSTQKSKMSELERATRDGAAIGKKRADIAKKIADKAKQLSSYQAKQFKADEQAVKKVAQEQKRLSDERTKHEAFIKQSLSSMRTTASATMEAEEEYDFFISHASEDKEAFVQDLVAALRDLGAKIFYDAYTLKVGDSLRRKIDQGLANSKFGIVVLSEHFFSKQWPARELDGLTAMEIGGQTRILPIWHKVSYDEVRRFSPSLADKVALNTSLKSVEEIAKELHSLI</sequence>
<accession>C0RGW8</accession>
<gene>
    <name type="primary">tcpB</name>
    <name type="synonym">btp1</name>
    <name type="synonym">btpA</name>
    <name evidence="6" type="ordered locus">BMEA_A0279</name>
</gene>
<proteinExistence type="inferred from homology"/>
<dbReference type="EC" id="3.2.2.-" evidence="1"/>
<dbReference type="EC" id="3.2.2.6" evidence="2"/>
<dbReference type="EMBL" id="CP001488">
    <property type="protein sequence ID" value="ACO00076.1"/>
    <property type="molecule type" value="Genomic_DNA"/>
</dbReference>
<dbReference type="RefSeq" id="WP_004684737.1">
    <property type="nucleotide sequence ID" value="NC_012441.1"/>
</dbReference>
<dbReference type="SMR" id="C0RGW8"/>
<dbReference type="GeneID" id="29594531"/>
<dbReference type="KEGG" id="bmi:BMEA_A0279"/>
<dbReference type="HOGENOM" id="CLU_086674_0_0_5"/>
<dbReference type="EvolutionaryTrace" id="C0RGW8"/>
<dbReference type="Proteomes" id="UP000001748">
    <property type="component" value="Chromosome I"/>
</dbReference>
<dbReference type="GO" id="GO:0005576">
    <property type="term" value="C:extracellular region"/>
    <property type="evidence" value="ECO:0007669"/>
    <property type="project" value="UniProtKB-SubCell"/>
</dbReference>
<dbReference type="GO" id="GO:0020002">
    <property type="term" value="C:host cell plasma membrane"/>
    <property type="evidence" value="ECO:0007669"/>
    <property type="project" value="UniProtKB-SubCell"/>
</dbReference>
<dbReference type="GO" id="GO:0016020">
    <property type="term" value="C:membrane"/>
    <property type="evidence" value="ECO:0007669"/>
    <property type="project" value="UniProtKB-KW"/>
</dbReference>
<dbReference type="GO" id="GO:0008289">
    <property type="term" value="F:lipid binding"/>
    <property type="evidence" value="ECO:0007669"/>
    <property type="project" value="UniProtKB-KW"/>
</dbReference>
<dbReference type="GO" id="GO:0003953">
    <property type="term" value="F:NAD+ nucleosidase activity"/>
    <property type="evidence" value="ECO:0000314"/>
    <property type="project" value="UniProtKB"/>
</dbReference>
<dbReference type="GO" id="GO:0061809">
    <property type="term" value="F:NAD+ nucleosidase activity, cyclic ADP-ribose generating"/>
    <property type="evidence" value="ECO:0007669"/>
    <property type="project" value="UniProtKB-EC"/>
</dbReference>
<dbReference type="GO" id="GO:0019677">
    <property type="term" value="P:NAD catabolic process"/>
    <property type="evidence" value="ECO:0000314"/>
    <property type="project" value="UniProtKB"/>
</dbReference>
<dbReference type="GO" id="GO:0007165">
    <property type="term" value="P:signal transduction"/>
    <property type="evidence" value="ECO:0007669"/>
    <property type="project" value="InterPro"/>
</dbReference>
<dbReference type="Gene3D" id="3.40.50.10140">
    <property type="entry name" value="Toll/interleukin-1 receptor homology (TIR) domain"/>
    <property type="match status" value="1"/>
</dbReference>
<dbReference type="InterPro" id="IPR000157">
    <property type="entry name" value="TIR_dom"/>
</dbReference>
<dbReference type="InterPro" id="IPR035897">
    <property type="entry name" value="Toll_tir_struct_dom_sf"/>
</dbReference>
<dbReference type="PANTHER" id="PTHR32009:SF39">
    <property type="entry name" value="TIR DOMAIN-CONTAINING PROTEIN"/>
    <property type="match status" value="1"/>
</dbReference>
<dbReference type="PANTHER" id="PTHR32009">
    <property type="entry name" value="TMV RESISTANCE PROTEIN N-LIKE"/>
    <property type="match status" value="1"/>
</dbReference>
<dbReference type="Pfam" id="PF13676">
    <property type="entry name" value="TIR_2"/>
    <property type="match status" value="1"/>
</dbReference>
<dbReference type="SMART" id="SM00255">
    <property type="entry name" value="TIR"/>
    <property type="match status" value="1"/>
</dbReference>
<dbReference type="SUPFAM" id="SSF52200">
    <property type="entry name" value="Toll/Interleukin receptor TIR domain"/>
    <property type="match status" value="1"/>
</dbReference>
<dbReference type="PROSITE" id="PS50104">
    <property type="entry name" value="TIR"/>
    <property type="match status" value="1"/>
</dbReference>